<accession>Q1GRJ2</accession>
<keyword id="KW-0028">Amino-acid biosynthesis</keyword>
<keyword id="KW-0170">Cobalt</keyword>
<keyword id="KW-0220">Diaminopimelate biosynthesis</keyword>
<keyword id="KW-0378">Hydrolase</keyword>
<keyword id="KW-0457">Lysine biosynthesis</keyword>
<keyword id="KW-0479">Metal-binding</keyword>
<keyword id="KW-1185">Reference proteome</keyword>
<keyword id="KW-0862">Zinc</keyword>
<feature type="chain" id="PRO_0000375756" description="Succinyl-diaminopimelate desuccinylase">
    <location>
        <begin position="1"/>
        <end position="377"/>
    </location>
</feature>
<feature type="active site" evidence="1">
    <location>
        <position position="77"/>
    </location>
</feature>
<feature type="active site" description="Proton acceptor" evidence="1">
    <location>
        <position position="136"/>
    </location>
</feature>
<feature type="binding site" evidence="1">
    <location>
        <position position="75"/>
    </location>
    <ligand>
        <name>Zn(2+)</name>
        <dbReference type="ChEBI" id="CHEBI:29105"/>
        <label>1</label>
    </ligand>
</feature>
<feature type="binding site" evidence="1">
    <location>
        <position position="106"/>
    </location>
    <ligand>
        <name>Zn(2+)</name>
        <dbReference type="ChEBI" id="CHEBI:29105"/>
        <label>1</label>
    </ligand>
</feature>
<feature type="binding site" evidence="1">
    <location>
        <position position="106"/>
    </location>
    <ligand>
        <name>Zn(2+)</name>
        <dbReference type="ChEBI" id="CHEBI:29105"/>
        <label>2</label>
    </ligand>
</feature>
<feature type="binding site" evidence="1">
    <location>
        <position position="137"/>
    </location>
    <ligand>
        <name>Zn(2+)</name>
        <dbReference type="ChEBI" id="CHEBI:29105"/>
        <label>2</label>
    </ligand>
</feature>
<feature type="binding site" evidence="1">
    <location>
        <position position="165"/>
    </location>
    <ligand>
        <name>Zn(2+)</name>
        <dbReference type="ChEBI" id="CHEBI:29105"/>
        <label>1</label>
    </ligand>
</feature>
<feature type="binding site" evidence="1">
    <location>
        <position position="350"/>
    </location>
    <ligand>
        <name>Zn(2+)</name>
        <dbReference type="ChEBI" id="CHEBI:29105"/>
        <label>2</label>
    </ligand>
</feature>
<proteinExistence type="inferred from homology"/>
<dbReference type="EC" id="3.5.1.18" evidence="1"/>
<dbReference type="EMBL" id="CP000356">
    <property type="protein sequence ID" value="ABF53730.1"/>
    <property type="molecule type" value="Genomic_DNA"/>
</dbReference>
<dbReference type="RefSeq" id="WP_011542306.1">
    <property type="nucleotide sequence ID" value="NC_008048.1"/>
</dbReference>
<dbReference type="SMR" id="Q1GRJ2"/>
<dbReference type="STRING" id="317655.Sala_2019"/>
<dbReference type="KEGG" id="sal:Sala_2019"/>
<dbReference type="eggNOG" id="COG0624">
    <property type="taxonomic scope" value="Bacteria"/>
</dbReference>
<dbReference type="HOGENOM" id="CLU_021802_4_0_5"/>
<dbReference type="OrthoDB" id="9809784at2"/>
<dbReference type="UniPathway" id="UPA00034">
    <property type="reaction ID" value="UER00021"/>
</dbReference>
<dbReference type="Proteomes" id="UP000006578">
    <property type="component" value="Chromosome"/>
</dbReference>
<dbReference type="GO" id="GO:0008777">
    <property type="term" value="F:acetylornithine deacetylase activity"/>
    <property type="evidence" value="ECO:0007669"/>
    <property type="project" value="TreeGrafter"/>
</dbReference>
<dbReference type="GO" id="GO:0050897">
    <property type="term" value="F:cobalt ion binding"/>
    <property type="evidence" value="ECO:0007669"/>
    <property type="project" value="UniProtKB-UniRule"/>
</dbReference>
<dbReference type="GO" id="GO:0009014">
    <property type="term" value="F:succinyl-diaminopimelate desuccinylase activity"/>
    <property type="evidence" value="ECO:0007669"/>
    <property type="project" value="UniProtKB-UniRule"/>
</dbReference>
<dbReference type="GO" id="GO:0008270">
    <property type="term" value="F:zinc ion binding"/>
    <property type="evidence" value="ECO:0007669"/>
    <property type="project" value="UniProtKB-UniRule"/>
</dbReference>
<dbReference type="GO" id="GO:0019877">
    <property type="term" value="P:diaminopimelate biosynthetic process"/>
    <property type="evidence" value="ECO:0007669"/>
    <property type="project" value="UniProtKB-UniRule"/>
</dbReference>
<dbReference type="GO" id="GO:0006526">
    <property type="term" value="P:L-arginine biosynthetic process"/>
    <property type="evidence" value="ECO:0007669"/>
    <property type="project" value="TreeGrafter"/>
</dbReference>
<dbReference type="GO" id="GO:0009089">
    <property type="term" value="P:lysine biosynthetic process via diaminopimelate"/>
    <property type="evidence" value="ECO:0007669"/>
    <property type="project" value="UniProtKB-UniRule"/>
</dbReference>
<dbReference type="CDD" id="cd03891">
    <property type="entry name" value="M20_DapE_proteobac"/>
    <property type="match status" value="1"/>
</dbReference>
<dbReference type="Gene3D" id="3.30.70.360">
    <property type="match status" value="1"/>
</dbReference>
<dbReference type="Gene3D" id="3.40.630.10">
    <property type="entry name" value="Zn peptidases"/>
    <property type="match status" value="1"/>
</dbReference>
<dbReference type="HAMAP" id="MF_01690">
    <property type="entry name" value="DapE"/>
    <property type="match status" value="1"/>
</dbReference>
<dbReference type="InterPro" id="IPR001261">
    <property type="entry name" value="ArgE/DapE_CS"/>
</dbReference>
<dbReference type="InterPro" id="IPR036264">
    <property type="entry name" value="Bact_exopeptidase_dim_dom"/>
</dbReference>
<dbReference type="InterPro" id="IPR005941">
    <property type="entry name" value="DapE_proteobac"/>
</dbReference>
<dbReference type="InterPro" id="IPR002933">
    <property type="entry name" value="Peptidase_M20"/>
</dbReference>
<dbReference type="InterPro" id="IPR011650">
    <property type="entry name" value="Peptidase_M20_dimer"/>
</dbReference>
<dbReference type="InterPro" id="IPR050072">
    <property type="entry name" value="Peptidase_M20A"/>
</dbReference>
<dbReference type="NCBIfam" id="TIGR01246">
    <property type="entry name" value="dapE_proteo"/>
    <property type="match status" value="1"/>
</dbReference>
<dbReference type="NCBIfam" id="NF009557">
    <property type="entry name" value="PRK13009.1"/>
    <property type="match status" value="1"/>
</dbReference>
<dbReference type="PANTHER" id="PTHR43808">
    <property type="entry name" value="ACETYLORNITHINE DEACETYLASE"/>
    <property type="match status" value="1"/>
</dbReference>
<dbReference type="PANTHER" id="PTHR43808:SF31">
    <property type="entry name" value="N-ACETYL-L-CITRULLINE DEACETYLASE"/>
    <property type="match status" value="1"/>
</dbReference>
<dbReference type="Pfam" id="PF07687">
    <property type="entry name" value="M20_dimer"/>
    <property type="match status" value="1"/>
</dbReference>
<dbReference type="Pfam" id="PF01546">
    <property type="entry name" value="Peptidase_M20"/>
    <property type="match status" value="1"/>
</dbReference>
<dbReference type="SUPFAM" id="SSF55031">
    <property type="entry name" value="Bacterial exopeptidase dimerisation domain"/>
    <property type="match status" value="1"/>
</dbReference>
<dbReference type="SUPFAM" id="SSF53187">
    <property type="entry name" value="Zn-dependent exopeptidases"/>
    <property type="match status" value="1"/>
</dbReference>
<dbReference type="PROSITE" id="PS00759">
    <property type="entry name" value="ARGE_DAPE_CPG2_2"/>
    <property type="match status" value="1"/>
</dbReference>
<evidence type="ECO:0000255" key="1">
    <source>
        <dbReference type="HAMAP-Rule" id="MF_01690"/>
    </source>
</evidence>
<comment type="function">
    <text evidence="1">Catalyzes the hydrolysis of N-succinyl-L,L-diaminopimelic acid (SDAP), forming succinate and LL-2,6-diaminopimelate (DAP), an intermediate involved in the bacterial biosynthesis of lysine and meso-diaminopimelic acid, an essential component of bacterial cell walls.</text>
</comment>
<comment type="catalytic activity">
    <reaction evidence="1">
        <text>N-succinyl-(2S,6S)-2,6-diaminopimelate + H2O = (2S,6S)-2,6-diaminopimelate + succinate</text>
        <dbReference type="Rhea" id="RHEA:22608"/>
        <dbReference type="ChEBI" id="CHEBI:15377"/>
        <dbReference type="ChEBI" id="CHEBI:30031"/>
        <dbReference type="ChEBI" id="CHEBI:57609"/>
        <dbReference type="ChEBI" id="CHEBI:58087"/>
        <dbReference type="EC" id="3.5.1.18"/>
    </reaction>
</comment>
<comment type="cofactor">
    <cofactor evidence="1">
        <name>Zn(2+)</name>
        <dbReference type="ChEBI" id="CHEBI:29105"/>
    </cofactor>
    <cofactor evidence="1">
        <name>Co(2+)</name>
        <dbReference type="ChEBI" id="CHEBI:48828"/>
    </cofactor>
    <text evidence="1">Binds 2 Zn(2+) or Co(2+) ions per subunit.</text>
</comment>
<comment type="pathway">
    <text evidence="1">Amino-acid biosynthesis; L-lysine biosynthesis via DAP pathway; LL-2,6-diaminopimelate from (S)-tetrahydrodipicolinate (succinylase route): step 3/3.</text>
</comment>
<comment type="subunit">
    <text evidence="1">Homodimer.</text>
</comment>
<comment type="similarity">
    <text evidence="1">Belongs to the peptidase M20A family. DapE subfamily.</text>
</comment>
<sequence length="377" mass="40049">MTRNIDPIELAKALIAVPSVTPATGAVFDVLEAALTPLGFTVERFIDGIEPDGPVENLLAVRRGSGPKHFGFAGHLDVVPPGVGWTSDAFAPEIRGELLYGRGAVDMKGAIAAFVAAAAATPVDAGTISLIITGDEEGPAIFGTRALMEHMDARRVTPDMIVVGEPTSVNRLGDMVKIGRRGSVNIWIDVPGTQGHVAYPHLADNPIPKLVKILAAIDAVVLDEGSDWFQPSNIEFTDIEVGNGATNVIPASARARLSIRFNDQHRGAELVAMIERIAHEVEPAARVLGKISGEAFLTPPGELSELVAEAIHAETDICAEMSTTGGTSDARFLHALCPVVEFGLTNATMHKLDEAVAIEDLHRLTAIYRGILMRVFL</sequence>
<gene>
    <name evidence="1" type="primary">dapE</name>
    <name type="ordered locus">Sala_2019</name>
</gene>
<reference key="1">
    <citation type="journal article" date="2009" name="Proc. Natl. Acad. Sci. U.S.A.">
        <title>The genomic basis of trophic strategy in marine bacteria.</title>
        <authorList>
            <person name="Lauro F.M."/>
            <person name="McDougald D."/>
            <person name="Thomas T."/>
            <person name="Williams T.J."/>
            <person name="Egan S."/>
            <person name="Rice S."/>
            <person name="DeMaere M.Z."/>
            <person name="Ting L."/>
            <person name="Ertan H."/>
            <person name="Johnson J."/>
            <person name="Ferriera S."/>
            <person name="Lapidus A."/>
            <person name="Anderson I."/>
            <person name="Kyrpides N."/>
            <person name="Munk A.C."/>
            <person name="Detter C."/>
            <person name="Han C.S."/>
            <person name="Brown M.V."/>
            <person name="Robb F.T."/>
            <person name="Kjelleberg S."/>
            <person name="Cavicchioli R."/>
        </authorList>
    </citation>
    <scope>NUCLEOTIDE SEQUENCE [LARGE SCALE GENOMIC DNA]</scope>
    <source>
        <strain>DSM 13593 / LMG 18877 / RB2256</strain>
    </source>
</reference>
<name>DAPE_SPHAL</name>
<organism>
    <name type="scientific">Sphingopyxis alaskensis (strain DSM 13593 / LMG 18877 / RB2256)</name>
    <name type="common">Sphingomonas alaskensis</name>
    <dbReference type="NCBI Taxonomy" id="317655"/>
    <lineage>
        <taxon>Bacteria</taxon>
        <taxon>Pseudomonadati</taxon>
        <taxon>Pseudomonadota</taxon>
        <taxon>Alphaproteobacteria</taxon>
        <taxon>Sphingomonadales</taxon>
        <taxon>Sphingomonadaceae</taxon>
        <taxon>Sphingopyxis</taxon>
    </lineage>
</organism>
<protein>
    <recommendedName>
        <fullName evidence="1">Succinyl-diaminopimelate desuccinylase</fullName>
        <shortName evidence="1">SDAP desuccinylase</shortName>
        <ecNumber evidence="1">3.5.1.18</ecNumber>
    </recommendedName>
    <alternativeName>
        <fullName evidence="1">N-succinyl-LL-2,6-diaminoheptanedioate amidohydrolase</fullName>
    </alternativeName>
</protein>